<evidence type="ECO:0000250" key="1"/>
<evidence type="ECO:0000256" key="2">
    <source>
        <dbReference type="SAM" id="MobiDB-lite"/>
    </source>
</evidence>
<evidence type="ECO:0000305" key="3"/>
<protein>
    <recommendedName>
        <fullName>A-type inclusion protein A25 homolog</fullName>
        <shortName>ATI</shortName>
    </recommendedName>
</protein>
<proteinExistence type="inferred from homology"/>
<reference key="1">
    <citation type="journal article" date="1993" name="J. Gen. Virol.">
        <title>Characterization of the gene encoding the A-type inclusion protein of camelpox virus and sequence comparison with other orthopoxviruses.</title>
        <authorList>
            <person name="Meyer H."/>
            <person name="Rziha H.-J."/>
        </authorList>
    </citation>
    <scope>NUCLEOTIDE SEQUENCE [GENOMIC DNA]</scope>
</reference>
<name>ATI_CAMPC</name>
<accession>Q05482</accession>
<keyword id="KW-0426">Late protein</keyword>
<keyword id="KW-0677">Repeat</keyword>
<keyword id="KW-0946">Virion</keyword>
<dbReference type="EMBL" id="X69774">
    <property type="protein sequence ID" value="CAA49429.1"/>
    <property type="molecule type" value="Genomic_DNA"/>
</dbReference>
<dbReference type="PIR" id="JQ2162">
    <property type="entry name" value="JQ2162"/>
</dbReference>
<dbReference type="SMR" id="Q05482"/>
<dbReference type="GO" id="GO:0044423">
    <property type="term" value="C:virion component"/>
    <property type="evidence" value="ECO:0007669"/>
    <property type="project" value="UniProtKB-KW"/>
</dbReference>
<dbReference type="GO" id="GO:0003682">
    <property type="term" value="F:chromatin binding"/>
    <property type="evidence" value="ECO:0007669"/>
    <property type="project" value="TreeGrafter"/>
</dbReference>
<dbReference type="GO" id="GO:0016032">
    <property type="term" value="P:viral process"/>
    <property type="evidence" value="ECO:0007669"/>
    <property type="project" value="InterPro"/>
</dbReference>
<dbReference type="Gene3D" id="1.10.287.1490">
    <property type="match status" value="1"/>
</dbReference>
<dbReference type="InterPro" id="IPR007596">
    <property type="entry name" value="Pox_A_type_inc"/>
</dbReference>
<dbReference type="PANTHER" id="PTHR43941">
    <property type="entry name" value="STRUCTURAL MAINTENANCE OF CHROMOSOMES PROTEIN 2"/>
    <property type="match status" value="1"/>
</dbReference>
<dbReference type="PANTHER" id="PTHR43941:SF1">
    <property type="entry name" value="STRUCTURAL MAINTENANCE OF CHROMOSOMES PROTEIN 2"/>
    <property type="match status" value="1"/>
</dbReference>
<dbReference type="Pfam" id="PF04508">
    <property type="entry name" value="Pox_A_type_inc"/>
    <property type="match status" value="4"/>
</dbReference>
<sequence>MELTNLIEKCTKLSKDFATEVEKLWNDELSSESGLSRKTRNVIRNILRDITKSLTTDKKSKCFCILERSTINGEQIKDVYKTIFNNGVDVESRINTTGKYVLFTVMTYAAAELRLIKSDEIFALLSRFFNMICDIHRKYGCGNMFVGIPAALIVLLEIDHINKLFSVFSTRYDAKAYLYTEYFLFLNINHYLLSGSDLFINVAYCAVSFSSPIRVPDYIMEALTFKACDHIMKSGDLKYTYAFTKKVKDLFNTKSDSIYQYVRLHEMSYDGVSEDTDDDDEVFAILNLSIDSSVDRYRNRVLLLTPEVASLRKEYSEAEPDYKYLMDEEVSAYDKHLPKPITNTGIEEPHATGGDKEDQPIKVVYPPNNDKDDAIKPHNPLEDPNYVPTITRTDIGIADYQLVINKLIEWLDKCEEECGNGGEFKTELEEAKRKLTELNAELSDKLSKIMSLERDSVHKTERIDRLTKEIKELRDIQNGTDDGSDSSEIDKKIIRELRESLDREREMRSKLEKELDTIRDGKVEGSCQRELELRRMWLKQRDDDLRAEIDKRRNVEWELSRLRRDIKECDKYKEDLDKAKATISNYVSRISTLESEIAKYQQDRDTLSVVRRELEEERRRVKDLESRLDECTRNQEDTQEVDALRSRIRELENKLTDCIESGGGNLTEISRLQSRISDLERQLNECRGNVTEISRLESRISDLERQLNDCRRNNETNAETERDATS</sequence>
<organismHost>
    <name type="scientific">Camelus</name>
    <dbReference type="NCBI Taxonomy" id="9836"/>
</organismHost>
<feature type="chain" id="PRO_0000099281" description="A-type inclusion protein A25 homolog">
    <location>
        <begin position="1"/>
        <end position="726"/>
    </location>
</feature>
<feature type="repeat" description="1">
    <location>
        <begin position="612"/>
        <end position="634"/>
    </location>
</feature>
<feature type="repeat" description="2">
    <location>
        <begin position="639"/>
        <end position="661"/>
    </location>
</feature>
<feature type="repeat" description="3">
    <location>
        <begin position="667"/>
        <end position="689"/>
    </location>
</feature>
<feature type="repeat" description="4">
    <location>
        <begin position="691"/>
        <end position="713"/>
    </location>
</feature>
<feature type="region of interest" description="Disordered" evidence="2">
    <location>
        <begin position="342"/>
        <end position="361"/>
    </location>
</feature>
<feature type="region of interest" description="4 X approximate tandem repeats">
    <location>
        <begin position="612"/>
        <end position="713"/>
    </location>
</feature>
<feature type="compositionally biased region" description="Basic and acidic residues" evidence="2">
    <location>
        <begin position="347"/>
        <end position="360"/>
    </location>
</feature>
<organism>
    <name type="scientific">Camelpox virus (strain CP-1)</name>
    <dbReference type="NCBI Taxonomy" id="203174"/>
    <lineage>
        <taxon>Viruses</taxon>
        <taxon>Varidnaviria</taxon>
        <taxon>Bamfordvirae</taxon>
        <taxon>Nucleocytoviricota</taxon>
        <taxon>Pokkesviricetes</taxon>
        <taxon>Chitovirales</taxon>
        <taxon>Poxviridae</taxon>
        <taxon>Chordopoxvirinae</taxon>
        <taxon>Orthopoxvirus</taxon>
        <taxon>Camelpox virus</taxon>
    </lineage>
</organism>
<comment type="function">
    <text evidence="1">Structural protein that forms a matrix surrounding the mature virion (MV) through interaction with protein A26. Presence of protein A25 in the virion structurally prevents direct virus-cell fusion mechanism (By similarity).</text>
</comment>
<comment type="subunit">
    <text evidence="1">Interacts (via N-terminus) with protein A26.</text>
</comment>
<comment type="subcellular location">
    <subcellularLocation>
        <location>Virion</location>
    </subcellularLocation>
    <text evidence="1">Present above the membrane of mature virions (MV).</text>
</comment>
<comment type="miscellaneous">
    <text>Some orthopoxviruses such as cowpox, ectromelia, and raccoonpox viruses, form large cytoplasmic inclusions within which mature virions are embedded by a process called occlusion. In those viruses, A26 bridges mature virion with inclusion bodies through interactions with proteins A25 and A27 on the mature virion membrane. In camelpox virus, the protein A25 is deleted in its C-terminal region and no inclusion body is observed.</text>
</comment>
<comment type="similarity">
    <text evidence="3">Belongs to the poxviridae A25 protein family.</text>
</comment>